<protein>
    <recommendedName>
        <fullName evidence="1">ATP synthase gamma chain</fullName>
    </recommendedName>
    <alternativeName>
        <fullName evidence="1">ATP synthase F1 sector gamma subunit</fullName>
    </alternativeName>
    <alternativeName>
        <fullName evidence="1">F-ATPase gamma subunit</fullName>
    </alternativeName>
</protein>
<dbReference type="EMBL" id="CP000553">
    <property type="protein sequence ID" value="ABM76404.1"/>
    <property type="molecule type" value="Genomic_DNA"/>
</dbReference>
<dbReference type="RefSeq" id="WP_011824390.1">
    <property type="nucleotide sequence ID" value="NC_008819.1"/>
</dbReference>
<dbReference type="SMR" id="A2C4J4"/>
<dbReference type="KEGG" id="pme:NATL1_18481"/>
<dbReference type="eggNOG" id="COG0224">
    <property type="taxonomic scope" value="Bacteria"/>
</dbReference>
<dbReference type="HOGENOM" id="CLU_050669_0_0_3"/>
<dbReference type="Proteomes" id="UP000002592">
    <property type="component" value="Chromosome"/>
</dbReference>
<dbReference type="GO" id="GO:0031676">
    <property type="term" value="C:plasma membrane-derived thylakoid membrane"/>
    <property type="evidence" value="ECO:0007669"/>
    <property type="project" value="UniProtKB-SubCell"/>
</dbReference>
<dbReference type="GO" id="GO:0045259">
    <property type="term" value="C:proton-transporting ATP synthase complex"/>
    <property type="evidence" value="ECO:0007669"/>
    <property type="project" value="UniProtKB-KW"/>
</dbReference>
<dbReference type="GO" id="GO:0005524">
    <property type="term" value="F:ATP binding"/>
    <property type="evidence" value="ECO:0007669"/>
    <property type="project" value="UniProtKB-UniRule"/>
</dbReference>
<dbReference type="GO" id="GO:0046933">
    <property type="term" value="F:proton-transporting ATP synthase activity, rotational mechanism"/>
    <property type="evidence" value="ECO:0007669"/>
    <property type="project" value="UniProtKB-UniRule"/>
</dbReference>
<dbReference type="CDD" id="cd12151">
    <property type="entry name" value="F1-ATPase_gamma"/>
    <property type="match status" value="1"/>
</dbReference>
<dbReference type="FunFam" id="3.40.1380.10:FF:000006">
    <property type="entry name" value="ATP synthase gamma chain"/>
    <property type="match status" value="1"/>
</dbReference>
<dbReference type="FunFam" id="1.10.287.80:FF:000003">
    <property type="entry name" value="ATP synthase gamma chain, chloroplastic"/>
    <property type="match status" value="1"/>
</dbReference>
<dbReference type="Gene3D" id="3.40.1380.10">
    <property type="match status" value="1"/>
</dbReference>
<dbReference type="Gene3D" id="1.10.287.80">
    <property type="entry name" value="ATP synthase, gamma subunit, helix hairpin domain"/>
    <property type="match status" value="2"/>
</dbReference>
<dbReference type="HAMAP" id="MF_00815">
    <property type="entry name" value="ATP_synth_gamma_bact"/>
    <property type="match status" value="1"/>
</dbReference>
<dbReference type="InterPro" id="IPR035968">
    <property type="entry name" value="ATP_synth_F1_ATPase_gsu"/>
</dbReference>
<dbReference type="InterPro" id="IPR000131">
    <property type="entry name" value="ATP_synth_F1_gsu"/>
</dbReference>
<dbReference type="InterPro" id="IPR023632">
    <property type="entry name" value="ATP_synth_F1_gsu_CS"/>
</dbReference>
<dbReference type="NCBIfam" id="TIGR01146">
    <property type="entry name" value="ATPsyn_F1gamma"/>
    <property type="match status" value="1"/>
</dbReference>
<dbReference type="NCBIfam" id="NF004145">
    <property type="entry name" value="PRK05621.1-2"/>
    <property type="match status" value="1"/>
</dbReference>
<dbReference type="PANTHER" id="PTHR11693">
    <property type="entry name" value="ATP SYNTHASE GAMMA CHAIN"/>
    <property type="match status" value="1"/>
</dbReference>
<dbReference type="PANTHER" id="PTHR11693:SF41">
    <property type="entry name" value="ATP SYNTHASE GAMMA CHAIN, CHLOROPLASTIC"/>
    <property type="match status" value="1"/>
</dbReference>
<dbReference type="Pfam" id="PF00231">
    <property type="entry name" value="ATP-synt"/>
    <property type="match status" value="1"/>
</dbReference>
<dbReference type="PRINTS" id="PR00126">
    <property type="entry name" value="ATPASEGAMMA"/>
</dbReference>
<dbReference type="SUPFAM" id="SSF52943">
    <property type="entry name" value="ATP synthase (F1-ATPase), gamma subunit"/>
    <property type="match status" value="1"/>
</dbReference>
<dbReference type="PROSITE" id="PS00153">
    <property type="entry name" value="ATPASE_GAMMA"/>
    <property type="match status" value="1"/>
</dbReference>
<sequence>MANLKDIRDRIVSVKNTRKITEAMRLVAAAKVRRAQDQVLRSRPFADRLARVLENIQSRMQFEAADSPLLNKREVKTITLLAVTGDRGLCGGYNANIIKRTEKRYAELKGQGYSPDLVLIGKKAIGYFENRSSLYNIRATFKELEQVPTSEDAASITSEVLAEFLSESTDRVEVIFTKFVSLVSCNPTIQTLLPLDPQGIADSEDEIFRLTTKDSQLIIEKDAAPTNEEPKLPSDIVFEQSPDQLLNALLPLYLQNQLLRALQESAASELASRMTAMNNASDNAKELAKNLTIDYNKARQAAITQEILEVVGGASA</sequence>
<organism>
    <name type="scientific">Prochlorococcus marinus (strain NATL1A)</name>
    <dbReference type="NCBI Taxonomy" id="167555"/>
    <lineage>
        <taxon>Bacteria</taxon>
        <taxon>Bacillati</taxon>
        <taxon>Cyanobacteriota</taxon>
        <taxon>Cyanophyceae</taxon>
        <taxon>Synechococcales</taxon>
        <taxon>Prochlorococcaceae</taxon>
        <taxon>Prochlorococcus</taxon>
    </lineage>
</organism>
<proteinExistence type="inferred from homology"/>
<gene>
    <name evidence="1" type="primary">atpG</name>
    <name evidence="1" type="synonym">atpC</name>
    <name type="ordered locus">NATL1_18481</name>
</gene>
<accession>A2C4J4</accession>
<name>ATPG_PROM1</name>
<evidence type="ECO:0000255" key="1">
    <source>
        <dbReference type="HAMAP-Rule" id="MF_00815"/>
    </source>
</evidence>
<keyword id="KW-0066">ATP synthesis</keyword>
<keyword id="KW-0139">CF(1)</keyword>
<keyword id="KW-0375">Hydrogen ion transport</keyword>
<keyword id="KW-0406">Ion transport</keyword>
<keyword id="KW-0472">Membrane</keyword>
<keyword id="KW-0793">Thylakoid</keyword>
<keyword id="KW-0813">Transport</keyword>
<feature type="chain" id="PRO_1000053283" description="ATP synthase gamma chain">
    <location>
        <begin position="1"/>
        <end position="316"/>
    </location>
</feature>
<comment type="function">
    <text evidence="1">Produces ATP from ADP in the presence of a proton gradient across the membrane. The gamma chain is believed to be important in regulating ATPase activity and the flow of protons through the CF(0) complex.</text>
</comment>
<comment type="subunit">
    <text evidence="1">F-type ATPases have 2 components, CF(1) - the catalytic core - and CF(0) - the membrane proton channel. CF(1) has five subunits: alpha(3), beta(3), gamma(1), delta(1), epsilon(1). CF(0) has three main subunits: a, b and c.</text>
</comment>
<comment type="subcellular location">
    <subcellularLocation>
        <location evidence="1">Cellular thylakoid membrane</location>
        <topology evidence="1">Peripheral membrane protein</topology>
    </subcellularLocation>
</comment>
<comment type="similarity">
    <text evidence="1">Belongs to the ATPase gamma chain family.</text>
</comment>
<reference key="1">
    <citation type="journal article" date="2007" name="PLoS Genet.">
        <title>Patterns and implications of gene gain and loss in the evolution of Prochlorococcus.</title>
        <authorList>
            <person name="Kettler G.C."/>
            <person name="Martiny A.C."/>
            <person name="Huang K."/>
            <person name="Zucker J."/>
            <person name="Coleman M.L."/>
            <person name="Rodrigue S."/>
            <person name="Chen F."/>
            <person name="Lapidus A."/>
            <person name="Ferriera S."/>
            <person name="Johnson J."/>
            <person name="Steglich C."/>
            <person name="Church G.M."/>
            <person name="Richardson P."/>
            <person name="Chisholm S.W."/>
        </authorList>
    </citation>
    <scope>NUCLEOTIDE SEQUENCE [LARGE SCALE GENOMIC DNA]</scope>
    <source>
        <strain>NATL1A</strain>
    </source>
</reference>